<feature type="chain" id="PRO_0000175264" description="DNA-directed RNA polymerase subunit alpha">
    <location>
        <begin position="1"/>
        <end position="314"/>
    </location>
</feature>
<feature type="region of interest" description="Alpha N-terminal domain (alpha-NTD)" evidence="1">
    <location>
        <begin position="1"/>
        <end position="228"/>
    </location>
</feature>
<feature type="region of interest" description="Alpha C-terminal domain (alpha-CTD)" evidence="1">
    <location>
        <begin position="245"/>
        <end position="314"/>
    </location>
</feature>
<comment type="function">
    <text evidence="1">DNA-dependent RNA polymerase catalyzes the transcription of DNA into RNA using the four ribonucleoside triphosphates as substrates.</text>
</comment>
<comment type="catalytic activity">
    <reaction evidence="1">
        <text>RNA(n) + a ribonucleoside 5'-triphosphate = RNA(n+1) + diphosphate</text>
        <dbReference type="Rhea" id="RHEA:21248"/>
        <dbReference type="Rhea" id="RHEA-COMP:14527"/>
        <dbReference type="Rhea" id="RHEA-COMP:17342"/>
        <dbReference type="ChEBI" id="CHEBI:33019"/>
        <dbReference type="ChEBI" id="CHEBI:61557"/>
        <dbReference type="ChEBI" id="CHEBI:140395"/>
        <dbReference type="EC" id="2.7.7.6"/>
    </reaction>
</comment>
<comment type="subunit">
    <text evidence="1">Homodimer. The RNAP catalytic core consists of 2 alpha, 1 beta, 1 beta' and 1 omega subunit. When a sigma factor is associated with the core the holoenzyme is formed, which can initiate transcription.</text>
</comment>
<comment type="domain">
    <text evidence="1">The N-terminal domain is essential for RNAP assembly and basal transcription, whereas the C-terminal domain is involved in interaction with transcriptional regulators and with upstream promoter elements.</text>
</comment>
<comment type="similarity">
    <text evidence="1">Belongs to the RNA polymerase alpha chain family.</text>
</comment>
<keyword id="KW-0240">DNA-directed RNA polymerase</keyword>
<keyword id="KW-0548">Nucleotidyltransferase</keyword>
<keyword id="KW-1185">Reference proteome</keyword>
<keyword id="KW-0804">Transcription</keyword>
<keyword id="KW-0808">Transferase</keyword>
<name>RPOA_SHOC1</name>
<evidence type="ECO:0000255" key="1">
    <source>
        <dbReference type="HAMAP-Rule" id="MF_00059"/>
    </source>
</evidence>
<dbReference type="EC" id="2.7.7.6" evidence="1"/>
<dbReference type="EMBL" id="AP006627">
    <property type="protein sequence ID" value="BAD62720.1"/>
    <property type="molecule type" value="Genomic_DNA"/>
</dbReference>
<dbReference type="RefSeq" id="WP_011245040.1">
    <property type="nucleotide sequence ID" value="NC_006582.1"/>
</dbReference>
<dbReference type="SMR" id="Q5WLN5"/>
<dbReference type="STRING" id="66692.ABC0177"/>
<dbReference type="KEGG" id="bcl:ABC0177"/>
<dbReference type="eggNOG" id="COG0202">
    <property type="taxonomic scope" value="Bacteria"/>
</dbReference>
<dbReference type="HOGENOM" id="CLU_053084_0_1_9"/>
<dbReference type="OrthoDB" id="9805706at2"/>
<dbReference type="Proteomes" id="UP000001168">
    <property type="component" value="Chromosome"/>
</dbReference>
<dbReference type="GO" id="GO:0005737">
    <property type="term" value="C:cytoplasm"/>
    <property type="evidence" value="ECO:0007669"/>
    <property type="project" value="UniProtKB-ARBA"/>
</dbReference>
<dbReference type="GO" id="GO:0000428">
    <property type="term" value="C:DNA-directed RNA polymerase complex"/>
    <property type="evidence" value="ECO:0007669"/>
    <property type="project" value="UniProtKB-KW"/>
</dbReference>
<dbReference type="GO" id="GO:0003677">
    <property type="term" value="F:DNA binding"/>
    <property type="evidence" value="ECO:0007669"/>
    <property type="project" value="UniProtKB-UniRule"/>
</dbReference>
<dbReference type="GO" id="GO:0003899">
    <property type="term" value="F:DNA-directed RNA polymerase activity"/>
    <property type="evidence" value="ECO:0007669"/>
    <property type="project" value="UniProtKB-UniRule"/>
</dbReference>
<dbReference type="GO" id="GO:0046983">
    <property type="term" value="F:protein dimerization activity"/>
    <property type="evidence" value="ECO:0007669"/>
    <property type="project" value="InterPro"/>
</dbReference>
<dbReference type="GO" id="GO:0006351">
    <property type="term" value="P:DNA-templated transcription"/>
    <property type="evidence" value="ECO:0007669"/>
    <property type="project" value="UniProtKB-UniRule"/>
</dbReference>
<dbReference type="CDD" id="cd06928">
    <property type="entry name" value="RNAP_alpha_NTD"/>
    <property type="match status" value="1"/>
</dbReference>
<dbReference type="FunFam" id="1.10.150.20:FF:000001">
    <property type="entry name" value="DNA-directed RNA polymerase subunit alpha"/>
    <property type="match status" value="1"/>
</dbReference>
<dbReference type="FunFam" id="2.170.120.12:FF:000001">
    <property type="entry name" value="DNA-directed RNA polymerase subunit alpha"/>
    <property type="match status" value="1"/>
</dbReference>
<dbReference type="Gene3D" id="1.10.150.20">
    <property type="entry name" value="5' to 3' exonuclease, C-terminal subdomain"/>
    <property type="match status" value="1"/>
</dbReference>
<dbReference type="Gene3D" id="2.170.120.12">
    <property type="entry name" value="DNA-directed RNA polymerase, insert domain"/>
    <property type="match status" value="1"/>
</dbReference>
<dbReference type="Gene3D" id="3.30.1360.10">
    <property type="entry name" value="RNA polymerase, RBP11-like subunit"/>
    <property type="match status" value="1"/>
</dbReference>
<dbReference type="HAMAP" id="MF_00059">
    <property type="entry name" value="RNApol_bact_RpoA"/>
    <property type="match status" value="1"/>
</dbReference>
<dbReference type="InterPro" id="IPR011262">
    <property type="entry name" value="DNA-dir_RNA_pol_insert"/>
</dbReference>
<dbReference type="InterPro" id="IPR011263">
    <property type="entry name" value="DNA-dir_RNA_pol_RpoA/D/Rpb3"/>
</dbReference>
<dbReference type="InterPro" id="IPR011773">
    <property type="entry name" value="DNA-dir_RpoA"/>
</dbReference>
<dbReference type="InterPro" id="IPR036603">
    <property type="entry name" value="RBP11-like"/>
</dbReference>
<dbReference type="InterPro" id="IPR011260">
    <property type="entry name" value="RNAP_asu_C"/>
</dbReference>
<dbReference type="InterPro" id="IPR036643">
    <property type="entry name" value="RNApol_insert_sf"/>
</dbReference>
<dbReference type="NCBIfam" id="NF003513">
    <property type="entry name" value="PRK05182.1-2"/>
    <property type="match status" value="1"/>
</dbReference>
<dbReference type="NCBIfam" id="NF003515">
    <property type="entry name" value="PRK05182.2-1"/>
    <property type="match status" value="1"/>
</dbReference>
<dbReference type="NCBIfam" id="NF003516">
    <property type="entry name" value="PRK05182.2-2"/>
    <property type="match status" value="1"/>
</dbReference>
<dbReference type="NCBIfam" id="NF003519">
    <property type="entry name" value="PRK05182.2-5"/>
    <property type="match status" value="1"/>
</dbReference>
<dbReference type="NCBIfam" id="TIGR02027">
    <property type="entry name" value="rpoA"/>
    <property type="match status" value="1"/>
</dbReference>
<dbReference type="Pfam" id="PF01000">
    <property type="entry name" value="RNA_pol_A_bac"/>
    <property type="match status" value="1"/>
</dbReference>
<dbReference type="Pfam" id="PF03118">
    <property type="entry name" value="RNA_pol_A_CTD"/>
    <property type="match status" value="1"/>
</dbReference>
<dbReference type="Pfam" id="PF01193">
    <property type="entry name" value="RNA_pol_L"/>
    <property type="match status" value="1"/>
</dbReference>
<dbReference type="SMART" id="SM00662">
    <property type="entry name" value="RPOLD"/>
    <property type="match status" value="1"/>
</dbReference>
<dbReference type="SUPFAM" id="SSF47789">
    <property type="entry name" value="C-terminal domain of RNA polymerase alpha subunit"/>
    <property type="match status" value="1"/>
</dbReference>
<dbReference type="SUPFAM" id="SSF56553">
    <property type="entry name" value="Insert subdomain of RNA polymerase alpha subunit"/>
    <property type="match status" value="1"/>
</dbReference>
<dbReference type="SUPFAM" id="SSF55257">
    <property type="entry name" value="RBP11-like subunits of RNA polymerase"/>
    <property type="match status" value="1"/>
</dbReference>
<protein>
    <recommendedName>
        <fullName evidence="1">DNA-directed RNA polymerase subunit alpha</fullName>
        <shortName evidence="1">RNAP subunit alpha</shortName>
        <ecNumber evidence="1">2.7.7.6</ecNumber>
    </recommendedName>
    <alternativeName>
        <fullName evidence="1">RNA polymerase subunit alpha</fullName>
    </alternativeName>
    <alternativeName>
        <fullName evidence="1">Transcriptase subunit alpha</fullName>
    </alternativeName>
</protein>
<reference key="1">
    <citation type="submission" date="2003-10" db="EMBL/GenBank/DDBJ databases">
        <title>The complete genome sequence of the alkaliphilic Bacillus clausii KSM-K16.</title>
        <authorList>
            <person name="Takaki Y."/>
            <person name="Kageyama Y."/>
            <person name="Shimamura S."/>
            <person name="Suzuki H."/>
            <person name="Nishi S."/>
            <person name="Hatada Y."/>
            <person name="Kawai S."/>
            <person name="Ito S."/>
            <person name="Horikoshi K."/>
        </authorList>
    </citation>
    <scope>NUCLEOTIDE SEQUENCE [LARGE SCALE GENOMIC DNA]</scope>
    <source>
        <strain>KSM-K16</strain>
    </source>
</reference>
<proteinExistence type="inferred from homology"/>
<sequence length="314" mass="34951">MIEIEKPNIETVEVSEDAKYGKFVVEPLERGYGTTLGNSLRRILLSSLPGAAVTSVQIDGVLHEFSTIEGVVEDVTTIILNLKKLALKIYSDEEKTLEIDVQGEGNVTAGDLTHDSDVEVLNPDLHIATLTKGASFRMRLQAKRGRGYVLAEGNKNDDQPIGVLPIDSIYTPVARVNYQVENTRVGQVTNYDKLTLDVWTDGSTRPEEAVSLGVKILTEHLNIFVGLTDQAQNAEIMVEKEEDQKEKVLEMTIEELDLSVRSYNCLKRAGINTVQELTHKTEEDMMKVRNLGRKSLEEVQEKLGELGLGLRNEE</sequence>
<gene>
    <name evidence="1" type="primary">rpoA</name>
    <name type="ordered locus">ABC0177</name>
</gene>
<organism>
    <name type="scientific">Shouchella clausii (strain KSM-K16)</name>
    <name type="common">Alkalihalobacillus clausii</name>
    <dbReference type="NCBI Taxonomy" id="66692"/>
    <lineage>
        <taxon>Bacteria</taxon>
        <taxon>Bacillati</taxon>
        <taxon>Bacillota</taxon>
        <taxon>Bacilli</taxon>
        <taxon>Bacillales</taxon>
        <taxon>Bacillaceae</taxon>
        <taxon>Shouchella</taxon>
    </lineage>
</organism>
<accession>Q5WLN5</accession>